<keyword id="KW-0030">Aminoacyl-tRNA synthetase</keyword>
<keyword id="KW-0067">ATP-binding</keyword>
<keyword id="KW-0963">Cytoplasm</keyword>
<keyword id="KW-0436">Ligase</keyword>
<keyword id="KW-0479">Metal-binding</keyword>
<keyword id="KW-0547">Nucleotide-binding</keyword>
<keyword id="KW-0648">Protein biosynthesis</keyword>
<keyword id="KW-1185">Reference proteome</keyword>
<keyword id="KW-0862">Zinc</keyword>
<gene>
    <name evidence="1" type="primary">metG</name>
    <name type="ordered locus">BAD_1535</name>
</gene>
<comment type="function">
    <text evidence="1">Is required not only for elongation of protein synthesis but also for the initiation of all mRNA translation through initiator tRNA(fMet) aminoacylation.</text>
</comment>
<comment type="catalytic activity">
    <reaction evidence="1">
        <text>tRNA(Met) + L-methionine + ATP = L-methionyl-tRNA(Met) + AMP + diphosphate</text>
        <dbReference type="Rhea" id="RHEA:13481"/>
        <dbReference type="Rhea" id="RHEA-COMP:9667"/>
        <dbReference type="Rhea" id="RHEA-COMP:9698"/>
        <dbReference type="ChEBI" id="CHEBI:30616"/>
        <dbReference type="ChEBI" id="CHEBI:33019"/>
        <dbReference type="ChEBI" id="CHEBI:57844"/>
        <dbReference type="ChEBI" id="CHEBI:78442"/>
        <dbReference type="ChEBI" id="CHEBI:78530"/>
        <dbReference type="ChEBI" id="CHEBI:456215"/>
        <dbReference type="EC" id="6.1.1.10"/>
    </reaction>
</comment>
<comment type="cofactor">
    <cofactor evidence="1">
        <name>Zn(2+)</name>
        <dbReference type="ChEBI" id="CHEBI:29105"/>
    </cofactor>
    <text evidence="1">Binds 1 zinc ion per subunit.</text>
</comment>
<comment type="subunit">
    <text evidence="1">Monomer.</text>
</comment>
<comment type="subcellular location">
    <subcellularLocation>
        <location evidence="1">Cytoplasm</location>
    </subcellularLocation>
</comment>
<comment type="similarity">
    <text evidence="1">Belongs to the class-I aminoacyl-tRNA synthetase family. MetG type 1 subfamily.</text>
</comment>
<reference key="1">
    <citation type="submission" date="2006-12" db="EMBL/GenBank/DDBJ databases">
        <title>Bifidobacterium adolescentis complete genome sequence.</title>
        <authorList>
            <person name="Suzuki T."/>
            <person name="Tsuda Y."/>
            <person name="Kanou N."/>
            <person name="Inoue T."/>
            <person name="Kumazaki K."/>
            <person name="Nagano S."/>
            <person name="Hirai S."/>
            <person name="Tanaka K."/>
            <person name="Watanabe K."/>
        </authorList>
    </citation>
    <scope>NUCLEOTIDE SEQUENCE [LARGE SCALE GENOMIC DNA]</scope>
    <source>
        <strain>ATCC 15703 / DSM 20083 / NCTC 11814 / E194a</strain>
    </source>
</reference>
<protein>
    <recommendedName>
        <fullName evidence="1">Methionine--tRNA ligase</fullName>
        <ecNumber evidence="1">6.1.1.10</ecNumber>
    </recommendedName>
    <alternativeName>
        <fullName evidence="1">Methionyl-tRNA synthetase</fullName>
        <shortName evidence="1">MetRS</shortName>
    </alternativeName>
</protein>
<dbReference type="EC" id="6.1.1.10" evidence="1"/>
<dbReference type="EMBL" id="AP009256">
    <property type="protein sequence ID" value="BAF40316.1"/>
    <property type="molecule type" value="Genomic_DNA"/>
</dbReference>
<dbReference type="RefSeq" id="WP_011743834.1">
    <property type="nucleotide sequence ID" value="NC_008618.1"/>
</dbReference>
<dbReference type="SMR" id="A1A3N3"/>
<dbReference type="STRING" id="367928.BAD_1535"/>
<dbReference type="PaxDb" id="1680-BADO_1477"/>
<dbReference type="GeneID" id="4556930"/>
<dbReference type="KEGG" id="bad:BAD_1535"/>
<dbReference type="HOGENOM" id="CLU_009710_1_2_11"/>
<dbReference type="Proteomes" id="UP000008702">
    <property type="component" value="Chromosome"/>
</dbReference>
<dbReference type="GO" id="GO:0005829">
    <property type="term" value="C:cytosol"/>
    <property type="evidence" value="ECO:0007669"/>
    <property type="project" value="TreeGrafter"/>
</dbReference>
<dbReference type="GO" id="GO:0005524">
    <property type="term" value="F:ATP binding"/>
    <property type="evidence" value="ECO:0007669"/>
    <property type="project" value="UniProtKB-UniRule"/>
</dbReference>
<dbReference type="GO" id="GO:0046872">
    <property type="term" value="F:metal ion binding"/>
    <property type="evidence" value="ECO:0007669"/>
    <property type="project" value="UniProtKB-KW"/>
</dbReference>
<dbReference type="GO" id="GO:0004825">
    <property type="term" value="F:methionine-tRNA ligase activity"/>
    <property type="evidence" value="ECO:0007669"/>
    <property type="project" value="UniProtKB-UniRule"/>
</dbReference>
<dbReference type="GO" id="GO:0006431">
    <property type="term" value="P:methionyl-tRNA aminoacylation"/>
    <property type="evidence" value="ECO:0007669"/>
    <property type="project" value="UniProtKB-UniRule"/>
</dbReference>
<dbReference type="CDD" id="cd07957">
    <property type="entry name" value="Anticodon_Ia_Met"/>
    <property type="match status" value="1"/>
</dbReference>
<dbReference type="CDD" id="cd00814">
    <property type="entry name" value="MetRS_core"/>
    <property type="match status" value="1"/>
</dbReference>
<dbReference type="FunFam" id="2.20.28.20:FF:000001">
    <property type="entry name" value="Methionine--tRNA ligase"/>
    <property type="match status" value="1"/>
</dbReference>
<dbReference type="Gene3D" id="3.40.50.620">
    <property type="entry name" value="HUPs"/>
    <property type="match status" value="1"/>
</dbReference>
<dbReference type="Gene3D" id="1.10.730.10">
    <property type="entry name" value="Isoleucyl-tRNA Synthetase, Domain 1"/>
    <property type="match status" value="1"/>
</dbReference>
<dbReference type="Gene3D" id="2.20.28.20">
    <property type="entry name" value="Methionyl-tRNA synthetase, Zn-domain"/>
    <property type="match status" value="1"/>
</dbReference>
<dbReference type="HAMAP" id="MF_00098">
    <property type="entry name" value="Met_tRNA_synth_type1"/>
    <property type="match status" value="1"/>
</dbReference>
<dbReference type="InterPro" id="IPR041872">
    <property type="entry name" value="Anticodon_Met"/>
</dbReference>
<dbReference type="InterPro" id="IPR013155">
    <property type="entry name" value="M/V/L/I-tRNA-synth_anticd-bd"/>
</dbReference>
<dbReference type="InterPro" id="IPR023458">
    <property type="entry name" value="Met-tRNA_ligase_1"/>
</dbReference>
<dbReference type="InterPro" id="IPR014758">
    <property type="entry name" value="Met-tRNA_synth"/>
</dbReference>
<dbReference type="InterPro" id="IPR015413">
    <property type="entry name" value="Methionyl/Leucyl_tRNA_Synth"/>
</dbReference>
<dbReference type="InterPro" id="IPR033911">
    <property type="entry name" value="MetRS_core"/>
</dbReference>
<dbReference type="InterPro" id="IPR029038">
    <property type="entry name" value="MetRS_Zn"/>
</dbReference>
<dbReference type="InterPro" id="IPR014729">
    <property type="entry name" value="Rossmann-like_a/b/a_fold"/>
</dbReference>
<dbReference type="InterPro" id="IPR009080">
    <property type="entry name" value="tRNAsynth_Ia_anticodon-bd"/>
</dbReference>
<dbReference type="NCBIfam" id="TIGR00398">
    <property type="entry name" value="metG"/>
    <property type="match status" value="1"/>
</dbReference>
<dbReference type="PANTHER" id="PTHR45765">
    <property type="entry name" value="METHIONINE--TRNA LIGASE"/>
    <property type="match status" value="1"/>
</dbReference>
<dbReference type="PANTHER" id="PTHR45765:SF1">
    <property type="entry name" value="METHIONINE--TRNA LIGASE, CYTOPLASMIC"/>
    <property type="match status" value="1"/>
</dbReference>
<dbReference type="Pfam" id="PF08264">
    <property type="entry name" value="Anticodon_1"/>
    <property type="match status" value="1"/>
</dbReference>
<dbReference type="Pfam" id="PF09334">
    <property type="entry name" value="tRNA-synt_1g"/>
    <property type="match status" value="1"/>
</dbReference>
<dbReference type="PRINTS" id="PR01041">
    <property type="entry name" value="TRNASYNTHMET"/>
</dbReference>
<dbReference type="SUPFAM" id="SSF47323">
    <property type="entry name" value="Anticodon-binding domain of a subclass of class I aminoacyl-tRNA synthetases"/>
    <property type="match status" value="1"/>
</dbReference>
<dbReference type="SUPFAM" id="SSF57770">
    <property type="entry name" value="Methionyl-tRNA synthetase (MetRS), Zn-domain"/>
    <property type="match status" value="1"/>
</dbReference>
<dbReference type="SUPFAM" id="SSF52374">
    <property type="entry name" value="Nucleotidylyl transferase"/>
    <property type="match status" value="1"/>
</dbReference>
<sequence>MSHILVNVAWPYANGPRHIGHVAGFGVPSDVYARYERMKGNDVLMVSGTDEHGTPILVEADKEGVSAQELANRYNRVIAKDLCDLGLSYDLFTRTTTGNHEKVVQELFKQCLENGYIYKGTQKVAISPSTGRTLPDRYIEGTCPICGADGARGDQCDACGNELDPDELLNPVSKINGETPRFEETEHFFLDLPALAEANLAWLKTREGWRTNVINFSIGLFKEVKPRAITRDIDWGIPVPVKGWIDNPNKKLYVWFDAVIGYLSASIEWARRKGDPEAWRAWWNDPTTPGYYFMGKDNITFHSQIWPSEMLAYNGQGSKGGETGKLGPLNMPEQVVASEFMTMEGKKFSSSRGIVIYVKDILARYPVDAVRYYISVAGPESSDSDFTWAEFVRHNNEELAASWGNLVNRVANLINKNFGEIPAFDEASATDEDRALLAETKAAFETVGGLIENHRQKNALSEAMRVVGDINKYISATEPWKIKDNPARLGTVLHTAAQAVSDANHLLAPFLPHSAQKVWEALGGTGVFSPLPRLEEVEDLDKPGFTYPIITGDYKLGETVHPWASEPIVAGTSVPKPHPIFAKIPPEAVEEELARFDAELKARREAEAARLAAEKAKLEG</sequence>
<organism>
    <name type="scientific">Bifidobacterium adolescentis (strain ATCC 15703 / DSM 20083 / NCTC 11814 / E194a)</name>
    <dbReference type="NCBI Taxonomy" id="367928"/>
    <lineage>
        <taxon>Bacteria</taxon>
        <taxon>Bacillati</taxon>
        <taxon>Actinomycetota</taxon>
        <taxon>Actinomycetes</taxon>
        <taxon>Bifidobacteriales</taxon>
        <taxon>Bifidobacteriaceae</taxon>
        <taxon>Bifidobacterium</taxon>
    </lineage>
</organism>
<accession>A1A3N3</accession>
<proteinExistence type="inferred from homology"/>
<evidence type="ECO:0000255" key="1">
    <source>
        <dbReference type="HAMAP-Rule" id="MF_00098"/>
    </source>
</evidence>
<name>SYM_BIFAA</name>
<feature type="chain" id="PRO_0000331783" description="Methionine--tRNA ligase">
    <location>
        <begin position="1"/>
        <end position="620"/>
    </location>
</feature>
<feature type="short sequence motif" description="'HIGH' region">
    <location>
        <begin position="11"/>
        <end position="21"/>
    </location>
</feature>
<feature type="short sequence motif" description="'KMSKS' region">
    <location>
        <begin position="347"/>
        <end position="351"/>
    </location>
</feature>
<feature type="binding site" evidence="1">
    <location>
        <position position="143"/>
    </location>
    <ligand>
        <name>Zn(2+)</name>
        <dbReference type="ChEBI" id="CHEBI:29105"/>
    </ligand>
</feature>
<feature type="binding site" evidence="1">
    <location>
        <position position="146"/>
    </location>
    <ligand>
        <name>Zn(2+)</name>
        <dbReference type="ChEBI" id="CHEBI:29105"/>
    </ligand>
</feature>
<feature type="binding site" evidence="1">
    <location>
        <position position="156"/>
    </location>
    <ligand>
        <name>Zn(2+)</name>
        <dbReference type="ChEBI" id="CHEBI:29105"/>
    </ligand>
</feature>
<feature type="binding site" evidence="1">
    <location>
        <position position="159"/>
    </location>
    <ligand>
        <name>Zn(2+)</name>
        <dbReference type="ChEBI" id="CHEBI:29105"/>
    </ligand>
</feature>
<feature type="binding site" evidence="1">
    <location>
        <position position="350"/>
    </location>
    <ligand>
        <name>ATP</name>
        <dbReference type="ChEBI" id="CHEBI:30616"/>
    </ligand>
</feature>